<comment type="function">
    <text evidence="1 2 5 6">Ligand-activated Ca(2+)-permeable, nonselective cation channel (PubMed:14712238, PubMed:18775987). Involved in pain detection and possibly also in cold perception, oxygen concentration perception, cough, itch, and inner ear function (By similarity). Has a relatively high Ca(2+) selectivity, with a preference for divalent over monovalent cations (Ca(2+) &gt; Ba(2+) &gt; Mg(2+) &gt; NH4(+) &gt; Li(+) &gt; K(+)), the influx of cation into the cytoplasm, leads to membrane depolarization. Has a central role in the pain response to endogenous inflammatory mediators, such as bradykinin and to a diverse array of irritants. Activated by a large variety of structurally unrelated electrophilic and non-electrophilic chemical compounds, such as allylthiocyanate (AITC) from mustard oil or wasabi, cinnamaldehyde, diallyl disulfide (DADS) from garlic, and acrolein, an environmental irritant. Electrophilic ligands activate TRPA1 by interacting with critical N-terminal Cys residues in a covalent manner. Non-electrophile agonists bind at distinct sites in the transmembrane domain to promote channel activation. Also acts as an ionotropic cannabinoid receptor by being activated by delta(9)-tetrahydrocannabinol (THC), the psychoactive component of marijuana. May be a component for the mechanosensitive transduction channel of hair cells in inner ear, thereby participating in the perception of sounds (By similarity).</text>
</comment>
<comment type="catalytic activity">
    <reaction evidence="5 6">
        <text>Ca(2+)(in) = Ca(2+)(out)</text>
        <dbReference type="Rhea" id="RHEA:29671"/>
        <dbReference type="ChEBI" id="CHEBI:29108"/>
    </reaction>
</comment>
<comment type="catalytic activity">
    <reaction evidence="1">
        <text>Mg(2+)(in) = Mg(2+)(out)</text>
        <dbReference type="Rhea" id="RHEA:29827"/>
        <dbReference type="ChEBI" id="CHEBI:18420"/>
    </reaction>
</comment>
<comment type="catalytic activity">
    <reaction evidence="1">
        <text>Na(+)(in) = Na(+)(out)</text>
        <dbReference type="Rhea" id="RHEA:34963"/>
        <dbReference type="ChEBI" id="CHEBI:29101"/>
    </reaction>
</comment>
<comment type="catalytic activity">
    <reaction evidence="1">
        <text>K(+)(in) = K(+)(out)</text>
        <dbReference type="Rhea" id="RHEA:29463"/>
        <dbReference type="ChEBI" id="CHEBI:29103"/>
    </reaction>
</comment>
<comment type="catalytic activity">
    <reaction evidence="1">
        <text>Zn(2+)(in) = Zn(2+)(out)</text>
        <dbReference type="Rhea" id="RHEA:29351"/>
        <dbReference type="ChEBI" id="CHEBI:29105"/>
    </reaction>
</comment>
<comment type="activity regulation">
    <text evidence="1 5 6 7">Electrophilic ligands activate the channel by covalent modification of intracellular cysteines; Cys-622 plays a key role in covalent binding of electrophiles (By similarity). Extracellular Ca(2+) both potentiates and inactivates TRPA1; a rapid potentiation follows by slow desensitization (PubMed:18775987). Activated by increase in intracellular Ca(2+) concentration (By similarity). Inhibited by ruthenium red, a potent blocker of TRPV channels and selectively by A-967079 (PubMed:14712238, PubMed:21402443). Activated by benzyl isothiocyanate (BITC), iodoacetamide, sulfhydryl reactive agent MTSEA, N-methyl maleimide (NMM), N-ethylmaleimide (NEM), and 2-aminoethyldiphenylborinate (2-APB). Also activated by hyperoxia. Acivated by intracellular Zn(2+). TRPA1 activation may critically depend on the presence of small intracellular compounds such as polyphosphates (By similarity).</text>
</comment>
<comment type="subunit">
    <text evidence="1 2">Homotetramer (By similarity). Interacts with TMEM100 (By similarity). Interacts with EGLN1 (By similarity). Interacts with the scorpion wasabi receptor toxin at the same site that electrophiles but in a non-covalent manner (By similarity).</text>
</comment>
<comment type="subcellular location">
    <subcellularLocation>
        <location evidence="2">Cell membrane</location>
        <topology evidence="1">Multi-pass membrane protein</topology>
    </subcellularLocation>
</comment>
<comment type="tissue specificity">
    <text evidence="4">Specifically expressed in a subset of nociceptive neurons. Expressed in dorsal root ganglia.</text>
</comment>
<comment type="domain">
    <text evidence="1">C-terminal helices from the four subunits associate to form atypical coiled coil structure; this region is probably involved in binding the inositol polyphosphates that are required for optimal channel activity (in vitro).</text>
</comment>
<comment type="domain">
    <text evidence="1">The ANK repeat domain consists of a convex stem structure followed by a crescent-shaped structure that surrounds the protein core.</text>
</comment>
<comment type="PTM">
    <text evidence="2">TRPA1 activation by electrophiles occurs though covalent modification of specific cysteine residues in the N-terminal cytoplasmic domain (By similarity).</text>
</comment>
<comment type="PTM">
    <text evidence="1">Hydroxylation is required for TRPA1 activity inhibition in normoxia. In hypoxia, the decrease in oxygen concentration diminishes the activity of the hydroxylase EGLN1, thus relieving TRPA1 from inhibition and ultimately leading to channel activation.</text>
</comment>
<comment type="PTM">
    <text evidence="1">Oxidation of Cys-634 and Cys-859 in hyperoxia may override the hydroxylase EGLN1-mediated inhibition, causing TRPA1 activation.</text>
</comment>
<comment type="similarity">
    <text evidence="9">Belongs to the transient receptor (TC 1.A.4) family.</text>
</comment>
<comment type="online information" name="Protein Spotlight">
    <link uri="https://www.proteinspotlight.org/back_issues/082"/>
    <text>The power behind pain - Issue 82 of May 2007</text>
</comment>
<reference key="1">
    <citation type="journal article" date="2004" name="Nature">
        <title>Mustard oils and cannabinoids excite sensory nerve fibres through the TRP channel ANKTM1.</title>
        <authorList>
            <person name="Jordt S.-E."/>
            <person name="Bautista D.M."/>
            <person name="Chuang H.-H."/>
            <person name="McKemy D.D."/>
            <person name="Zygmunt P.M."/>
            <person name="Hoegestaett E.D."/>
            <person name="Meng I.D."/>
            <person name="Julius D."/>
        </authorList>
    </citation>
    <scope>NUCLEOTIDE SEQUENCE [MRNA]</scope>
    <scope>FUNCTION</scope>
    <scope>TRANSPORTER ACTIVITY</scope>
    <scope>ACTIVITY REGULATION</scope>
    <source>
        <strain>Sprague-Dawley</strain>
        <tissue>Trigeminal ganglion</tissue>
    </source>
</reference>
<reference key="2">
    <citation type="journal article" date="2004" name="Nature">
        <title>Genome sequence of the Brown Norway rat yields insights into mammalian evolution.</title>
        <authorList>
            <person name="Gibbs R.A."/>
            <person name="Weinstock G.M."/>
            <person name="Metzker M.L."/>
            <person name="Muzny D.M."/>
            <person name="Sodergren E.J."/>
            <person name="Scherer S."/>
            <person name="Scott G."/>
            <person name="Steffen D."/>
            <person name="Worley K.C."/>
            <person name="Burch P.E."/>
            <person name="Okwuonu G."/>
            <person name="Hines S."/>
            <person name="Lewis L."/>
            <person name="Deramo C."/>
            <person name="Delgado O."/>
            <person name="Dugan-Rocha S."/>
            <person name="Miner G."/>
            <person name="Morgan M."/>
            <person name="Hawes A."/>
            <person name="Gill R."/>
            <person name="Holt R.A."/>
            <person name="Adams M.D."/>
            <person name="Amanatides P.G."/>
            <person name="Baden-Tillson H."/>
            <person name="Barnstead M."/>
            <person name="Chin S."/>
            <person name="Evans C.A."/>
            <person name="Ferriera S."/>
            <person name="Fosler C."/>
            <person name="Glodek A."/>
            <person name="Gu Z."/>
            <person name="Jennings D."/>
            <person name="Kraft C.L."/>
            <person name="Nguyen T."/>
            <person name="Pfannkoch C.M."/>
            <person name="Sitter C."/>
            <person name="Sutton G.G."/>
            <person name="Venter J.C."/>
            <person name="Woodage T."/>
            <person name="Smith D."/>
            <person name="Lee H.-M."/>
            <person name="Gustafson E."/>
            <person name="Cahill P."/>
            <person name="Kana A."/>
            <person name="Doucette-Stamm L."/>
            <person name="Weinstock K."/>
            <person name="Fechtel K."/>
            <person name="Weiss R.B."/>
            <person name="Dunn D.M."/>
            <person name="Green E.D."/>
            <person name="Blakesley R.W."/>
            <person name="Bouffard G.G."/>
            <person name="De Jong P.J."/>
            <person name="Osoegawa K."/>
            <person name="Zhu B."/>
            <person name="Marra M."/>
            <person name="Schein J."/>
            <person name="Bosdet I."/>
            <person name="Fjell C."/>
            <person name="Jones S."/>
            <person name="Krzywinski M."/>
            <person name="Mathewson C."/>
            <person name="Siddiqui A."/>
            <person name="Wye N."/>
            <person name="McPherson J."/>
            <person name="Zhao S."/>
            <person name="Fraser C.M."/>
            <person name="Shetty J."/>
            <person name="Shatsman S."/>
            <person name="Geer K."/>
            <person name="Chen Y."/>
            <person name="Abramzon S."/>
            <person name="Nierman W.C."/>
            <person name="Havlak P.H."/>
            <person name="Chen R."/>
            <person name="Durbin K.J."/>
            <person name="Egan A."/>
            <person name="Ren Y."/>
            <person name="Song X.-Z."/>
            <person name="Li B."/>
            <person name="Liu Y."/>
            <person name="Qin X."/>
            <person name="Cawley S."/>
            <person name="Cooney A.J."/>
            <person name="D'Souza L.M."/>
            <person name="Martin K."/>
            <person name="Wu J.Q."/>
            <person name="Gonzalez-Garay M.L."/>
            <person name="Jackson A.R."/>
            <person name="Kalafus K.J."/>
            <person name="McLeod M.P."/>
            <person name="Milosavljevic A."/>
            <person name="Virk D."/>
            <person name="Volkov A."/>
            <person name="Wheeler D.A."/>
            <person name="Zhang Z."/>
            <person name="Bailey J.A."/>
            <person name="Eichler E.E."/>
            <person name="Tuzun E."/>
            <person name="Birney E."/>
            <person name="Mongin E."/>
            <person name="Ureta-Vidal A."/>
            <person name="Woodwark C."/>
            <person name="Zdobnov E."/>
            <person name="Bork P."/>
            <person name="Suyama M."/>
            <person name="Torrents D."/>
            <person name="Alexandersson M."/>
            <person name="Trask B.J."/>
            <person name="Young J.M."/>
            <person name="Huang H."/>
            <person name="Wang H."/>
            <person name="Xing H."/>
            <person name="Daniels S."/>
            <person name="Gietzen D."/>
            <person name="Schmidt J."/>
            <person name="Stevens K."/>
            <person name="Vitt U."/>
            <person name="Wingrove J."/>
            <person name="Camara F."/>
            <person name="Mar Alba M."/>
            <person name="Abril J.F."/>
            <person name="Guigo R."/>
            <person name="Smit A."/>
            <person name="Dubchak I."/>
            <person name="Rubin E.M."/>
            <person name="Couronne O."/>
            <person name="Poliakov A."/>
            <person name="Huebner N."/>
            <person name="Ganten D."/>
            <person name="Goesele C."/>
            <person name="Hummel O."/>
            <person name="Kreitler T."/>
            <person name="Lee Y.-A."/>
            <person name="Monti J."/>
            <person name="Schulz H."/>
            <person name="Zimdahl H."/>
            <person name="Himmelbauer H."/>
            <person name="Lehrach H."/>
            <person name="Jacob H.J."/>
            <person name="Bromberg S."/>
            <person name="Gullings-Handley J."/>
            <person name="Jensen-Seaman M.I."/>
            <person name="Kwitek A.E."/>
            <person name="Lazar J."/>
            <person name="Pasko D."/>
            <person name="Tonellato P.J."/>
            <person name="Twigger S."/>
            <person name="Ponting C.P."/>
            <person name="Duarte J.M."/>
            <person name="Rice S."/>
            <person name="Goodstadt L."/>
            <person name="Beatson S.A."/>
            <person name="Emes R.D."/>
            <person name="Winter E.E."/>
            <person name="Webber C."/>
            <person name="Brandt P."/>
            <person name="Nyakatura G."/>
            <person name="Adetobi M."/>
            <person name="Chiaromonte F."/>
            <person name="Elnitski L."/>
            <person name="Eswara P."/>
            <person name="Hardison R.C."/>
            <person name="Hou M."/>
            <person name="Kolbe D."/>
            <person name="Makova K."/>
            <person name="Miller W."/>
            <person name="Nekrutenko A."/>
            <person name="Riemer C."/>
            <person name="Schwartz S."/>
            <person name="Taylor J."/>
            <person name="Yang S."/>
            <person name="Zhang Y."/>
            <person name="Lindpaintner K."/>
            <person name="Andrews T.D."/>
            <person name="Caccamo M."/>
            <person name="Clamp M."/>
            <person name="Clarke L."/>
            <person name="Curwen V."/>
            <person name="Durbin R.M."/>
            <person name="Eyras E."/>
            <person name="Searle S.M."/>
            <person name="Cooper G.M."/>
            <person name="Batzoglou S."/>
            <person name="Brudno M."/>
            <person name="Sidow A."/>
            <person name="Stone E.A."/>
            <person name="Payseur B.A."/>
            <person name="Bourque G."/>
            <person name="Lopez-Otin C."/>
            <person name="Puente X.S."/>
            <person name="Chakrabarti K."/>
            <person name="Chatterji S."/>
            <person name="Dewey C."/>
            <person name="Pachter L."/>
            <person name="Bray N."/>
            <person name="Yap V.B."/>
            <person name="Caspi A."/>
            <person name="Tesler G."/>
            <person name="Pevzner P.A."/>
            <person name="Haussler D."/>
            <person name="Roskin K.M."/>
            <person name="Baertsch R."/>
            <person name="Clawson H."/>
            <person name="Furey T.S."/>
            <person name="Hinrichs A.S."/>
            <person name="Karolchik D."/>
            <person name="Kent W.J."/>
            <person name="Rosenbloom K.R."/>
            <person name="Trumbower H."/>
            <person name="Weirauch M."/>
            <person name="Cooper D.N."/>
            <person name="Stenson P.D."/>
            <person name="Ma B."/>
            <person name="Brent M."/>
            <person name="Arumugam M."/>
            <person name="Shteynberg D."/>
            <person name="Copley R.R."/>
            <person name="Taylor M.S."/>
            <person name="Riethman H."/>
            <person name="Mudunuri U."/>
            <person name="Peterson J."/>
            <person name="Guyer M."/>
            <person name="Felsenfeld A."/>
            <person name="Old S."/>
            <person name="Mockrin S."/>
            <person name="Collins F.S."/>
        </authorList>
    </citation>
    <scope>NUCLEOTIDE SEQUENCE [LARGE SCALE GENOMIC DNA]</scope>
    <source>
        <strain>Brown Norway</strain>
    </source>
</reference>
<reference key="3">
    <citation type="journal article" date="2003" name="Cell">
        <title>ANKTM1, a TRP-like channel expressed in nociceptive neurons, is activated by cold temperatures.</title>
        <authorList>
            <person name="Story G.M."/>
            <person name="Peier A.M."/>
            <person name="Reeve A.J."/>
            <person name="Eid S.R."/>
            <person name="Mosbacher J."/>
            <person name="Hricik T.R."/>
            <person name="Earley T.J."/>
            <person name="Hergarden A.C."/>
            <person name="Anderson D.A."/>
            <person name="Hwang S.W."/>
            <person name="McIntyre P."/>
            <person name="Jegla T."/>
            <person name="Bevan S."/>
            <person name="Patapoutian A."/>
        </authorList>
    </citation>
    <scope>TISSUE SPECIFICITY</scope>
</reference>
<reference key="4">
    <citation type="journal article" date="2008" name="J. Biol. Chem.">
        <title>The nociceptor ion channel TRPA1 is potentiated and inactivated by permeating calcium ions.</title>
        <authorList>
            <person name="Wang Y.Y."/>
            <person name="Chang R.B."/>
            <person name="Waters H.N."/>
            <person name="McKemy D.D."/>
            <person name="Liman E.R."/>
        </authorList>
    </citation>
    <scope>FUNCTION</scope>
    <scope>TRANSPORTER ACTIVITY</scope>
    <scope>ACTIVITY REGULATION</scope>
    <scope>MUTAGENESIS OF ASP-918</scope>
</reference>
<reference key="5">
    <citation type="journal article" date="2011" name="Pain">
        <title>Selective blockade of TRPA1 channel attenuates pathological pain without altering noxious cold sensation or body temperature regulation.</title>
        <authorList>
            <person name="Chen J."/>
            <person name="Joshi S.K."/>
            <person name="DiDomenico S."/>
            <person name="Perner R.J."/>
            <person name="Mikusa J.P."/>
            <person name="Gauvin D.M."/>
            <person name="Segreti J.A."/>
            <person name="Han P."/>
            <person name="Zhang X.F."/>
            <person name="Niforatos W."/>
            <person name="Bianchi B.R."/>
            <person name="Baker S.J."/>
            <person name="Zhong C."/>
            <person name="Simler G.H."/>
            <person name="McDonald H.A."/>
            <person name="Schmidt R.G."/>
            <person name="McGaraughty S.P."/>
            <person name="Chu K.L."/>
            <person name="Faltynek C.R."/>
            <person name="Kort M.E."/>
            <person name="Reilly R.M."/>
            <person name="Kym P.R."/>
        </authorList>
    </citation>
    <scope>ACTIVITY REGULATION</scope>
</reference>
<evidence type="ECO:0000250" key="1">
    <source>
        <dbReference type="UniProtKB" id="O75762"/>
    </source>
</evidence>
<evidence type="ECO:0000250" key="2">
    <source>
        <dbReference type="UniProtKB" id="Q8BLA8"/>
    </source>
</evidence>
<evidence type="ECO:0000255" key="3"/>
<evidence type="ECO:0000269" key="4">
    <source>
    </source>
</evidence>
<evidence type="ECO:0000269" key="5">
    <source>
    </source>
</evidence>
<evidence type="ECO:0000269" key="6">
    <source>
    </source>
</evidence>
<evidence type="ECO:0000269" key="7">
    <source>
    </source>
</evidence>
<evidence type="ECO:0000303" key="8">
    <source>
    </source>
</evidence>
<evidence type="ECO:0000305" key="9"/>
<evidence type="ECO:0000312" key="10">
    <source>
        <dbReference type="RGD" id="1303284"/>
    </source>
</evidence>
<sequence length="1125" mass="128603">MKRSLRRVLRPEERKEVQGVVYRGVGEDMDCSKESFKVDIEGDMCRLEAFIKNRRKLSKYEDENLCLLHHAAAEGQVELMQLIINGSSCEALNVMDDYGNTPLHWAAEKNQVESVKFLLSQGANPNLRNRNMMAPLHIAVQGMYNEVIKVLTEHKATNINLEGENGNTALMSTCAKDNSEALQILLEKGAKLCKSNKWGDYPVHQAAFSGAKRCMELILAYGEKTGYSREAHINFVNHKKASPLHLAVQSGDLDMIKMCLDSGAHIDMMENAKCMALHFAATQGATDIVKLMISSYTGSSDIVNAVDGNQETLLHRASLFDHHDLADYLISVGADINSTDSEGRSPLILATASASWNIVNLLLSKGAKVDIKDHLGRNFLHLTVQQPYGLRNLRPEFLQMQHIKELVMDEDNDGCTPLHYACRQGAPVSVNNLLRFNVSVHSKSKDKKSPLHFAASYGRINTCQRLLQDISDTRLLNEGDLHGMTPLHLAAKNGHDKVVQLLLKKGALFLSDHNGWTALHHASMGGYTQTMKVILDTNLKCTDRLDEEGNTALHFAAREGHAKAVAMLLSYNADILLNKKQASFLHIALHNKRKEVVLTTIRSKRWDECLQVFTHDSPSNRCPIMEMVEYLPECMKVLLDFCMIPSTEDKSCQDYHIEYNFKYLQCPLSMTKKVTPTQDVIYEPLTILNVMVQHNRIELLNHPVCREYLLMKWCAYGFRAHMMNLGSYCLGLIPMTLLVVKIQPGMAFNSTGIINETISTHEERINTLNSFPLKICMILVFLSSIFGYCKEVVQIFQQKRNYFLDYNNALEWVIYTTSMIFVLPLFLDIPAYMQWQCGAIAIFFYWMNFLLYLQRFENCGIFIVMLEVIFKTLLRSTGVFIFLLLAFGLSFYVLLNFQDAFSTPLLSLIQTFSMMLGDINYRDAFLEPLFRNELAYPVLTFGQLIAFTMFVPIVLMNLLIGLAVGDIAEVQKHASLKRIAMQVELHTNLEKKLPFWYLRKVDQRSTIVYPNRPRHGRMLRFFHYFLSMQETRQEAPNIDTCLEMEILKQKYRLKDLTSLLEKQHELIKLIIQKMEIISETEDEDNHCSFQDRFKKERLEQMHSKWNFVLNAVKTKTHCSISHPDI</sequence>
<gene>
    <name evidence="10" type="primary">Trpa1</name>
    <name evidence="8" type="synonym">Anktm1</name>
</gene>
<name>TRPA1_RAT</name>
<organism>
    <name type="scientific">Rattus norvegicus</name>
    <name type="common">Rat</name>
    <dbReference type="NCBI Taxonomy" id="10116"/>
    <lineage>
        <taxon>Eukaryota</taxon>
        <taxon>Metazoa</taxon>
        <taxon>Chordata</taxon>
        <taxon>Craniata</taxon>
        <taxon>Vertebrata</taxon>
        <taxon>Euteleostomi</taxon>
        <taxon>Mammalia</taxon>
        <taxon>Eutheria</taxon>
        <taxon>Euarchontoglires</taxon>
        <taxon>Glires</taxon>
        <taxon>Rodentia</taxon>
        <taxon>Myomorpha</taxon>
        <taxon>Muroidea</taxon>
        <taxon>Muridae</taxon>
        <taxon>Murinae</taxon>
        <taxon>Rattus</taxon>
    </lineage>
</organism>
<dbReference type="EMBL" id="AY496961">
    <property type="protein sequence ID" value="AAS78661.1"/>
    <property type="molecule type" value="mRNA"/>
</dbReference>
<dbReference type="EMBL" id="AABR07046729">
    <property type="status" value="NOT_ANNOTATED_CDS"/>
    <property type="molecule type" value="Genomic_DNA"/>
</dbReference>
<dbReference type="RefSeq" id="NP_997491.2">
    <property type="nucleotide sequence ID" value="NM_207608.2"/>
</dbReference>
<dbReference type="SMR" id="Q6RI86"/>
<dbReference type="DIP" id="DIP-61522N"/>
<dbReference type="FunCoup" id="Q6RI86">
    <property type="interactions" value="38"/>
</dbReference>
<dbReference type="STRING" id="10116.ENSRNOP00000009874"/>
<dbReference type="BindingDB" id="Q6RI86"/>
<dbReference type="ChEMBL" id="CHEMBL5160"/>
<dbReference type="DrugCentral" id="Q6RI86"/>
<dbReference type="GuidetoPHARMACOLOGY" id="485"/>
<dbReference type="GlyCosmos" id="Q6RI86">
    <property type="glycosylation" value="2 sites, No reported glycans"/>
</dbReference>
<dbReference type="GlyGen" id="Q6RI86">
    <property type="glycosylation" value="2 sites"/>
</dbReference>
<dbReference type="PhosphoSitePlus" id="Q6RI86"/>
<dbReference type="PaxDb" id="10116-ENSRNOP00000009874"/>
<dbReference type="Ensembl" id="ENSRNOT00000009874.3">
    <property type="protein sequence ID" value="ENSRNOP00000009874.2"/>
    <property type="gene ID" value="ENSRNOG00000007354.3"/>
</dbReference>
<dbReference type="Ensembl" id="ENSRNOT00065017425">
    <property type="protein sequence ID" value="ENSRNOP00065013360"/>
    <property type="gene ID" value="ENSRNOG00065010758"/>
</dbReference>
<dbReference type="GeneID" id="312896"/>
<dbReference type="KEGG" id="rno:312896"/>
<dbReference type="UCSC" id="RGD:1303284">
    <property type="organism name" value="rat"/>
</dbReference>
<dbReference type="AGR" id="RGD:1303284"/>
<dbReference type="CTD" id="8989"/>
<dbReference type="RGD" id="1303284">
    <property type="gene designation" value="Trpa1"/>
</dbReference>
<dbReference type="eggNOG" id="KOG0510">
    <property type="taxonomic scope" value="Eukaryota"/>
</dbReference>
<dbReference type="GeneTree" id="ENSGT00940000156118"/>
<dbReference type="HOGENOM" id="CLU_006750_0_0_1"/>
<dbReference type="InParanoid" id="Q6RI86"/>
<dbReference type="OMA" id="HWATEKN"/>
<dbReference type="OrthoDB" id="1661883at2759"/>
<dbReference type="PhylomeDB" id="Q6RI86"/>
<dbReference type="TreeFam" id="TF317264"/>
<dbReference type="Reactome" id="R-RNO-3295583">
    <property type="pathway name" value="TRP channels"/>
</dbReference>
<dbReference type="PRO" id="PR:Q6RI86"/>
<dbReference type="Proteomes" id="UP000002494">
    <property type="component" value="Chromosome 5"/>
</dbReference>
<dbReference type="Bgee" id="ENSRNOG00000007354">
    <property type="expression patterns" value="Expressed in duodenum and 6 other cell types or tissues"/>
</dbReference>
<dbReference type="GO" id="GO:0016324">
    <property type="term" value="C:apical plasma membrane"/>
    <property type="evidence" value="ECO:0000314"/>
    <property type="project" value="RGD"/>
</dbReference>
<dbReference type="GO" id="GO:0030424">
    <property type="term" value="C:axon"/>
    <property type="evidence" value="ECO:0000314"/>
    <property type="project" value="RGD"/>
</dbReference>
<dbReference type="GO" id="GO:0005886">
    <property type="term" value="C:plasma membrane"/>
    <property type="evidence" value="ECO:0000250"/>
    <property type="project" value="UniProtKB"/>
</dbReference>
<dbReference type="GO" id="GO:0032421">
    <property type="term" value="C:stereocilium bundle"/>
    <property type="evidence" value="ECO:0000266"/>
    <property type="project" value="RGD"/>
</dbReference>
<dbReference type="GO" id="GO:0005262">
    <property type="term" value="F:calcium channel activity"/>
    <property type="evidence" value="ECO:0000266"/>
    <property type="project" value="RGD"/>
</dbReference>
<dbReference type="GO" id="GO:0015267">
    <property type="term" value="F:channel activity"/>
    <property type="evidence" value="ECO:0000266"/>
    <property type="project" value="RGD"/>
</dbReference>
<dbReference type="GO" id="GO:0042802">
    <property type="term" value="F:identical protein binding"/>
    <property type="evidence" value="ECO:0000266"/>
    <property type="project" value="RGD"/>
</dbReference>
<dbReference type="GO" id="GO:0015278">
    <property type="term" value="F:intracellularly gated calcium channel activity"/>
    <property type="evidence" value="ECO:0000250"/>
    <property type="project" value="UniProtKB"/>
</dbReference>
<dbReference type="GO" id="GO:0046872">
    <property type="term" value="F:metal ion binding"/>
    <property type="evidence" value="ECO:0007669"/>
    <property type="project" value="UniProtKB-KW"/>
</dbReference>
<dbReference type="GO" id="GO:0005216">
    <property type="term" value="F:monoatomic ion channel activity"/>
    <property type="evidence" value="ECO:0000266"/>
    <property type="project" value="RGD"/>
</dbReference>
<dbReference type="GO" id="GO:1990760">
    <property type="term" value="F:osmolarity-sensing monoatomic cation channel activity"/>
    <property type="evidence" value="ECO:0000314"/>
    <property type="project" value="RGD"/>
</dbReference>
<dbReference type="GO" id="GO:0097604">
    <property type="term" value="F:temperature-gated cation channel activity"/>
    <property type="evidence" value="ECO:0000250"/>
    <property type="project" value="UniProtKB"/>
</dbReference>
<dbReference type="GO" id="GO:0005245">
    <property type="term" value="F:voltage-gated calcium channel activity"/>
    <property type="evidence" value="ECO:0000314"/>
    <property type="project" value="RGD"/>
</dbReference>
<dbReference type="GO" id="GO:0097553">
    <property type="term" value="P:calcium ion transmembrane import into cytosol"/>
    <property type="evidence" value="ECO:0000314"/>
    <property type="project" value="RGD"/>
</dbReference>
<dbReference type="GO" id="GO:0070588">
    <property type="term" value="P:calcium ion transmembrane transport"/>
    <property type="evidence" value="ECO:0000250"/>
    <property type="project" value="UniProtKB"/>
</dbReference>
<dbReference type="GO" id="GO:0006816">
    <property type="term" value="P:calcium ion transport"/>
    <property type="evidence" value="ECO:0000266"/>
    <property type="project" value="RGD"/>
</dbReference>
<dbReference type="GO" id="GO:0007166">
    <property type="term" value="P:cell surface receptor signaling pathway"/>
    <property type="evidence" value="ECO:0000266"/>
    <property type="project" value="RGD"/>
</dbReference>
<dbReference type="GO" id="GO:0071313">
    <property type="term" value="P:cellular response to caffeine"/>
    <property type="evidence" value="ECO:0000270"/>
    <property type="project" value="RGD"/>
</dbReference>
<dbReference type="GO" id="GO:0071244">
    <property type="term" value="P:cellular response to carbon dioxide"/>
    <property type="evidence" value="ECO:0000314"/>
    <property type="project" value="RGD"/>
</dbReference>
<dbReference type="GO" id="GO:0070417">
    <property type="term" value="P:cellular response to cold"/>
    <property type="evidence" value="ECO:0000315"/>
    <property type="project" value="RGD"/>
</dbReference>
<dbReference type="GO" id="GO:0071240">
    <property type="term" value="P:cellular response to food"/>
    <property type="evidence" value="ECO:0007669"/>
    <property type="project" value="Ensembl"/>
</dbReference>
<dbReference type="GO" id="GO:0034605">
    <property type="term" value="P:cellular response to heat"/>
    <property type="evidence" value="ECO:0000315"/>
    <property type="project" value="RGD"/>
</dbReference>
<dbReference type="GO" id="GO:0070301">
    <property type="term" value="P:cellular response to hydrogen peroxide"/>
    <property type="evidence" value="ECO:0000266"/>
    <property type="project" value="RGD"/>
</dbReference>
<dbReference type="GO" id="GO:0097237">
    <property type="term" value="P:cellular response to toxic substance"/>
    <property type="evidence" value="ECO:0007669"/>
    <property type="project" value="Ensembl"/>
</dbReference>
<dbReference type="GO" id="GO:0050968">
    <property type="term" value="P:detection of chemical stimulus involved in sensory perception of pain"/>
    <property type="evidence" value="ECO:0000266"/>
    <property type="project" value="RGD"/>
</dbReference>
<dbReference type="GO" id="GO:0050974">
    <property type="term" value="P:detection of mechanical stimulus involved in sensory perception"/>
    <property type="evidence" value="ECO:0000266"/>
    <property type="project" value="RGD"/>
</dbReference>
<dbReference type="GO" id="GO:0050966">
    <property type="term" value="P:detection of mechanical stimulus involved in sensory perception of pain"/>
    <property type="evidence" value="ECO:0000266"/>
    <property type="project" value="RGD"/>
</dbReference>
<dbReference type="GO" id="GO:0006874">
    <property type="term" value="P:intracellular calcium ion homeostasis"/>
    <property type="evidence" value="ECO:0000266"/>
    <property type="project" value="RGD"/>
</dbReference>
<dbReference type="GO" id="GO:0035774">
    <property type="term" value="P:positive regulation of insulin secretion involved in cellular response to glucose stimulus"/>
    <property type="evidence" value="ECO:0000315"/>
    <property type="project" value="RGD"/>
</dbReference>
<dbReference type="GO" id="GO:1903793">
    <property type="term" value="P:positive regulation of monoatomic anion transport"/>
    <property type="evidence" value="ECO:0000315"/>
    <property type="project" value="RGD"/>
</dbReference>
<dbReference type="GO" id="GO:0051289">
    <property type="term" value="P:protein homotetramerization"/>
    <property type="evidence" value="ECO:0000250"/>
    <property type="project" value="UniProtKB"/>
</dbReference>
<dbReference type="GO" id="GO:1903522">
    <property type="term" value="P:regulation of blood circulation"/>
    <property type="evidence" value="ECO:0000315"/>
    <property type="project" value="RGD"/>
</dbReference>
<dbReference type="GO" id="GO:0098908">
    <property type="term" value="P:regulation of neuronal action potential"/>
    <property type="evidence" value="ECO:0000315"/>
    <property type="project" value="RGD"/>
</dbReference>
<dbReference type="GO" id="GO:0009409">
    <property type="term" value="P:response to cold"/>
    <property type="evidence" value="ECO:0000250"/>
    <property type="project" value="UniProtKB"/>
</dbReference>
<dbReference type="GO" id="GO:0042542">
    <property type="term" value="P:response to hydrogen peroxide"/>
    <property type="evidence" value="ECO:0000266"/>
    <property type="project" value="RGD"/>
</dbReference>
<dbReference type="GO" id="GO:0048265">
    <property type="term" value="P:response to pain"/>
    <property type="evidence" value="ECO:0000266"/>
    <property type="project" value="RGD"/>
</dbReference>
<dbReference type="GO" id="GO:0009410">
    <property type="term" value="P:response to xenobiotic stimulus"/>
    <property type="evidence" value="ECO:0000266"/>
    <property type="project" value="RGD"/>
</dbReference>
<dbReference type="GO" id="GO:0019233">
    <property type="term" value="P:sensory perception of pain"/>
    <property type="evidence" value="ECO:0000250"/>
    <property type="project" value="UniProtKB"/>
</dbReference>
<dbReference type="GO" id="GO:0050955">
    <property type="term" value="P:thermoception"/>
    <property type="evidence" value="ECO:0000266"/>
    <property type="project" value="RGD"/>
</dbReference>
<dbReference type="GO" id="GO:0014832">
    <property type="term" value="P:urinary bladder smooth muscle contraction"/>
    <property type="evidence" value="ECO:0000315"/>
    <property type="project" value="RGD"/>
</dbReference>
<dbReference type="FunFam" id="1.25.40.20:FF:000186">
    <property type="entry name" value="Transient receptor potential cation channel A1, isoform K"/>
    <property type="match status" value="1"/>
</dbReference>
<dbReference type="FunFam" id="1.25.40.20:FF:000272">
    <property type="entry name" value="Transient receptor potential cation channel subfamily A member 1"/>
    <property type="match status" value="1"/>
</dbReference>
<dbReference type="Gene3D" id="1.25.40.20">
    <property type="entry name" value="Ankyrin repeat-containing domain"/>
    <property type="match status" value="4"/>
</dbReference>
<dbReference type="InterPro" id="IPR002110">
    <property type="entry name" value="Ankyrin_rpt"/>
</dbReference>
<dbReference type="InterPro" id="IPR036770">
    <property type="entry name" value="Ankyrin_rpt-contain_sf"/>
</dbReference>
<dbReference type="InterPro" id="IPR005821">
    <property type="entry name" value="Ion_trans_dom"/>
</dbReference>
<dbReference type="InterPro" id="IPR052076">
    <property type="entry name" value="TRP_cation_channel"/>
</dbReference>
<dbReference type="PANTHER" id="PTHR47143:SF1">
    <property type="entry name" value="ION_TRANS DOMAIN-CONTAINING PROTEIN"/>
    <property type="match status" value="1"/>
</dbReference>
<dbReference type="PANTHER" id="PTHR47143">
    <property type="entry name" value="TRANSIENT RECEPTOR POTENTIAL CATION CHANNEL PROTEIN PAINLESS"/>
    <property type="match status" value="1"/>
</dbReference>
<dbReference type="Pfam" id="PF00023">
    <property type="entry name" value="Ank"/>
    <property type="match status" value="1"/>
</dbReference>
<dbReference type="Pfam" id="PF12796">
    <property type="entry name" value="Ank_2"/>
    <property type="match status" value="5"/>
</dbReference>
<dbReference type="Pfam" id="PF00520">
    <property type="entry name" value="Ion_trans"/>
    <property type="match status" value="1"/>
</dbReference>
<dbReference type="PRINTS" id="PR01415">
    <property type="entry name" value="ANKYRIN"/>
</dbReference>
<dbReference type="SMART" id="SM00248">
    <property type="entry name" value="ANK"/>
    <property type="match status" value="14"/>
</dbReference>
<dbReference type="SUPFAM" id="SSF48403">
    <property type="entry name" value="Ankyrin repeat"/>
    <property type="match status" value="2"/>
</dbReference>
<dbReference type="PROSITE" id="PS50297">
    <property type="entry name" value="ANK_REP_REGION"/>
    <property type="match status" value="1"/>
</dbReference>
<dbReference type="PROSITE" id="PS50088">
    <property type="entry name" value="ANK_REPEAT"/>
    <property type="match status" value="9"/>
</dbReference>
<protein>
    <recommendedName>
        <fullName evidence="10">Transient receptor potential cation channel subfamily A member 1</fullName>
    </recommendedName>
    <alternativeName>
        <fullName evidence="10">Ankyrin-like with transmembrane domains protein 1</fullName>
    </alternativeName>
    <alternativeName>
        <fullName evidence="1">Wasabi receptor</fullName>
    </alternativeName>
</protein>
<proteinExistence type="evidence at protein level"/>
<accession>Q6RI86</accession>
<accession>F1LRH9</accession>
<keyword id="KW-0040">ANK repeat</keyword>
<keyword id="KW-0106">Calcium</keyword>
<keyword id="KW-0107">Calcium channel</keyword>
<keyword id="KW-0109">Calcium transport</keyword>
<keyword id="KW-1003">Cell membrane</keyword>
<keyword id="KW-0175">Coiled coil</keyword>
<keyword id="KW-1015">Disulfide bond</keyword>
<keyword id="KW-0325">Glycoprotein</keyword>
<keyword id="KW-0379">Hydroxylation</keyword>
<keyword id="KW-0407">Ion channel</keyword>
<keyword id="KW-0406">Ion transport</keyword>
<keyword id="KW-0472">Membrane</keyword>
<keyword id="KW-0479">Metal-binding</keyword>
<keyword id="KW-0558">Oxidation</keyword>
<keyword id="KW-1185">Reference proteome</keyword>
<keyword id="KW-0677">Repeat</keyword>
<keyword id="KW-0716">Sensory transduction</keyword>
<keyword id="KW-0812">Transmembrane</keyword>
<keyword id="KW-1133">Transmembrane helix</keyword>
<keyword id="KW-0813">Transport</keyword>
<feature type="chain" id="PRO_0000215371" description="Transient receptor potential cation channel subfamily A member 1">
    <location>
        <begin position="1"/>
        <end position="1125"/>
    </location>
</feature>
<feature type="topological domain" description="Cytoplasmic" evidence="1">
    <location>
        <begin position="1"/>
        <end position="721"/>
    </location>
</feature>
<feature type="transmembrane region" description="Helical; Name=1" evidence="1">
    <location>
        <begin position="722"/>
        <end position="742"/>
    </location>
</feature>
<feature type="topological domain" description="Extracellular" evidence="1">
    <location>
        <begin position="743"/>
        <end position="767"/>
    </location>
</feature>
<feature type="transmembrane region" description="Helical; Name=2" evidence="1">
    <location>
        <begin position="768"/>
        <end position="788"/>
    </location>
</feature>
<feature type="topological domain" description="Cytoplasmic" evidence="1">
    <location>
        <begin position="789"/>
        <end position="806"/>
    </location>
</feature>
<feature type="transmembrane region" description="Helical; Name=3" evidence="1">
    <location>
        <begin position="807"/>
        <end position="827"/>
    </location>
</feature>
<feature type="topological domain" description="Extracellular" evidence="1">
    <location>
        <begin position="828"/>
        <end position="832"/>
    </location>
</feature>
<feature type="transmembrane region" description="Helical;Name=4" evidence="1">
    <location>
        <begin position="833"/>
        <end position="853"/>
    </location>
</feature>
<feature type="topological domain" description="Cytoplasmic" evidence="1">
    <location>
        <begin position="854"/>
        <end position="876"/>
    </location>
</feature>
<feature type="transmembrane region" description="Helical; Name=5" evidence="1">
    <location>
        <begin position="877"/>
        <end position="897"/>
    </location>
</feature>
<feature type="topological domain" description="Extracellular" evidence="1">
    <location>
        <begin position="898"/>
        <end position="904"/>
    </location>
</feature>
<feature type="intramembrane region" description="Pore-forming" evidence="1">
    <location>
        <begin position="905"/>
        <end position="925"/>
    </location>
</feature>
<feature type="topological domain" description="Extracellular" evidence="1">
    <location>
        <begin position="926"/>
        <end position="937"/>
    </location>
</feature>
<feature type="transmembrane region" description="Helical; Name=6" evidence="1">
    <location>
        <begin position="938"/>
        <end position="959"/>
    </location>
</feature>
<feature type="topological domain" description="Cytoplasmic" evidence="1">
    <location>
        <begin position="960"/>
        <end position="1125"/>
    </location>
</feature>
<feature type="repeat" description="ANK 1" evidence="3">
    <location>
        <begin position="63"/>
        <end position="94"/>
    </location>
</feature>
<feature type="repeat" description="ANK 2" evidence="3">
    <location>
        <begin position="98"/>
        <end position="127"/>
    </location>
</feature>
<feature type="repeat" description="ANK 3" evidence="3">
    <location>
        <begin position="131"/>
        <end position="161"/>
    </location>
</feature>
<feature type="repeat" description="ANK 4" evidence="3">
    <location>
        <begin position="165"/>
        <end position="194"/>
    </location>
</feature>
<feature type="repeat" description="ANK 5" evidence="3">
    <location>
        <begin position="198"/>
        <end position="227"/>
    </location>
</feature>
<feature type="repeat" description="ANK 6" evidence="3">
    <location>
        <begin position="239"/>
        <end position="268"/>
    </location>
</feature>
<feature type="repeat" description="ANK 7" evidence="3">
    <location>
        <begin position="272"/>
        <end position="301"/>
    </location>
</feature>
<feature type="repeat" description="ANK 8" evidence="3">
    <location>
        <begin position="309"/>
        <end position="338"/>
    </location>
</feature>
<feature type="repeat" description="ANK 9" evidence="3">
    <location>
        <begin position="342"/>
        <end position="371"/>
    </location>
</feature>
<feature type="repeat" description="ANK 10" evidence="3">
    <location>
        <begin position="413"/>
        <end position="442"/>
    </location>
</feature>
<feature type="repeat" description="ANK 11" evidence="3">
    <location>
        <begin position="446"/>
        <end position="475"/>
    </location>
</feature>
<feature type="repeat" description="ANK 12" evidence="3">
    <location>
        <begin position="482"/>
        <end position="511"/>
    </location>
</feature>
<feature type="repeat" description="ANK 13" evidence="3">
    <location>
        <begin position="514"/>
        <end position="543"/>
    </location>
</feature>
<feature type="repeat" description="ANK 14" evidence="3">
    <location>
        <begin position="548"/>
        <end position="577"/>
    </location>
</feature>
<feature type="coiled-coil region" evidence="1">
    <location>
        <begin position="1044"/>
        <end position="1073"/>
    </location>
</feature>
<feature type="binding site" description="covalent" evidence="2">
    <location>
        <position position="415"/>
    </location>
    <ligand>
        <name>(E)-cinnamaldehyde</name>
        <dbReference type="ChEBI" id="CHEBI:16731"/>
        <note>agonist</note>
    </ligand>
</feature>
<feature type="binding site" description="covalent" evidence="2">
    <location>
        <position position="422"/>
    </location>
    <ligand>
        <name>(E)-cinnamaldehyde</name>
        <dbReference type="ChEBI" id="CHEBI:16731"/>
        <note>agonist</note>
    </ligand>
</feature>
<feature type="binding site" description="covalent; Cys highly reactive" evidence="1 2">
    <location>
        <position position="622"/>
    </location>
    <ligand>
        <name>(E)-cinnamaldehyde</name>
        <dbReference type="ChEBI" id="CHEBI:16731"/>
        <note>agonist</note>
    </ligand>
</feature>
<feature type="binding site" description="covalent" evidence="1">
    <location>
        <position position="642"/>
    </location>
    <ligand>
        <name>(E)-cinnamaldehyde</name>
        <dbReference type="ChEBI" id="CHEBI:16731"/>
        <note>agonist</note>
    </ligand>
</feature>
<feature type="binding site" description="covalent" evidence="1">
    <location>
        <position position="666"/>
    </location>
    <ligand>
        <name>(E)-cinnamaldehyde</name>
        <dbReference type="ChEBI" id="CHEBI:16731"/>
        <note>agonist</note>
    </ligand>
</feature>
<feature type="binding site" description="covalent" evidence="1">
    <location>
        <position position="712"/>
    </location>
    <ligand>
        <name>(E)-cinnamaldehyde</name>
        <dbReference type="ChEBI" id="CHEBI:16731"/>
        <note>agonist</note>
    </ligand>
</feature>
<feature type="binding site" evidence="1">
    <location>
        <position position="791"/>
    </location>
    <ligand>
        <name>Ca(2+)</name>
        <dbReference type="ChEBI" id="CHEBI:29108"/>
    </ligand>
</feature>
<feature type="binding site" evidence="1">
    <location>
        <position position="794"/>
    </location>
    <ligand>
        <name>Ca(2+)</name>
        <dbReference type="ChEBI" id="CHEBI:29108"/>
    </ligand>
</feature>
<feature type="binding site" evidence="1">
    <location>
        <position position="808"/>
    </location>
    <ligand>
        <name>Ca(2+)</name>
        <dbReference type="ChEBI" id="CHEBI:29108"/>
    </ligand>
</feature>
<feature type="binding site" evidence="1">
    <location>
        <position position="811"/>
    </location>
    <ligand>
        <name>Ca(2+)</name>
        <dbReference type="ChEBI" id="CHEBI:29108"/>
    </ligand>
</feature>
<feature type="binding site" evidence="1">
    <location>
        <begin position="1048"/>
        <end position="1054"/>
    </location>
    <ligand>
        <name>a 1,2-diacyl-sn-glycero-3-phospho-(1D-myo-inositol)</name>
        <dbReference type="ChEBI" id="CHEBI:57880"/>
    </ligand>
</feature>
<feature type="site" description="Essential for electrophile activation. Sensor for electrophilic agents" evidence="1">
    <location>
        <position position="622"/>
    </location>
</feature>
<feature type="site" description="Key residue for activation by the scorpion wasabi receptor toxin" evidence="1">
    <location>
        <position position="623"/>
    </location>
</feature>
<feature type="site" description="Important residue for activation by the scorpion wasabi receptor toxin" evidence="1">
    <location>
        <position position="635"/>
    </location>
</feature>
<feature type="site" description="Important residue for activation by the scorpion wasabi receptor toxin" evidence="1">
    <location>
        <position position="647"/>
    </location>
</feature>
<feature type="site" description="Crucial for calcium permeation" evidence="6">
    <location>
        <position position="918"/>
    </location>
</feature>
<feature type="modified residue" description="4-hydroxyproline; transient" evidence="1">
    <location>
        <position position="395"/>
    </location>
</feature>
<feature type="modified residue" description="Cysteine sulfenic acid (-SOH); transient; in hyperoxia" evidence="1">
    <location>
        <position position="634"/>
    </location>
</feature>
<feature type="modified residue" description="Cysteine sulfenic acid (-SOH); transient; in hyperoxia" evidence="1">
    <location>
        <position position="859"/>
    </location>
</feature>
<feature type="glycosylation site" description="N-linked (GlcNAc...) asparagine" evidence="3">
    <location>
        <position position="749"/>
    </location>
</feature>
<feature type="glycosylation site" description="N-linked (GlcNAc...) asparagine" evidence="3">
    <location>
        <position position="755"/>
    </location>
</feature>
<feature type="disulfide bond" description="Alternate" evidence="2">
    <location>
        <begin position="193"/>
        <end position="666"/>
    </location>
</feature>
<feature type="disulfide bond" description="Alternate" evidence="2">
    <location>
        <begin position="463"/>
        <end position="666"/>
    </location>
</feature>
<feature type="disulfide bond" description="Alternate" evidence="2">
    <location>
        <begin position="609"/>
        <end position="622"/>
    </location>
</feature>
<feature type="disulfide bond" description="Alternate" evidence="2">
    <location>
        <begin position="622"/>
        <end position="666"/>
    </location>
</feature>
<feature type="disulfide bond" description="Alternate; transient; in hyperoxia; unknown whether inter- or intrachain" evidence="1">
    <location>
        <begin position="634"/>
        <end position="859"/>
    </location>
</feature>
<feature type="mutagenesis site" description="Ca(2+) permeability is greatly reduced." evidence="6">
    <original>D</original>
    <variation>A</variation>
    <location>
        <position position="918"/>
    </location>
</feature>
<feature type="mutagenesis site" description="Ca(2+) permeability is greatly increased." evidence="6">
    <original>D</original>
    <variation>E</variation>
    <location>
        <position position="918"/>
    </location>
</feature>
<feature type="sequence conflict" description="In Ref. 1; AAS78661." evidence="9" ref="1">
    <original>E</original>
    <variation>K</variation>
    <location>
        <position position="27"/>
    </location>
</feature>